<organism>
    <name type="scientific">Salmonella dublin (strain CT_02021853)</name>
    <dbReference type="NCBI Taxonomy" id="439851"/>
    <lineage>
        <taxon>Bacteria</taxon>
        <taxon>Pseudomonadati</taxon>
        <taxon>Pseudomonadota</taxon>
        <taxon>Gammaproteobacteria</taxon>
        <taxon>Enterobacterales</taxon>
        <taxon>Enterobacteriaceae</taxon>
        <taxon>Salmonella</taxon>
    </lineage>
</organism>
<sequence>MTLSPYLQEVAKRRTFAIISHPDAGKTTITEKVLLFGQAIQTAGTVKGRGSSQHAKSDWMEMEKQRGISITTSVMQFPYHDCLVNLLDTPGHEDFSEDTYRTLTAVDCCLMVIDAAKGVEDRTRKLMEVTRLRDTPILTFMNKLDRDIRDPMELLDEVENELKIGCAPITWPIGCGKLFKGVYHLYKDETYLYQTGKGHTIQEVRIVKGLNNPDLDAAVGEDLAQQLRDELELVQGASNEFDEELFLAGEITPVFFGTALGNFGVDHMLDGLVAWAPAPMPRQTDTRTVEASEEKFTGFVFKIQANMDPKHRDRVAFMRVVSGKYEKGMKLRQVRTGKDVVISDALTFMAGDRSHVEEAYPGDILGLHNHGTIQIGDTFTQGEMMKFTGIPNFAPELFRRIRLKDPLKQKQLLKGLVQLSEEGAVQVFRPISNNDLIVGAVGVLQFDVVVARLKSEYNVEAIYESVNVATARWVESADAKKFEEFKRKNETQLALDGGDNLTYIAPTMVNLNLTQERYPDVQFRKTREH</sequence>
<reference key="1">
    <citation type="journal article" date="2011" name="J. Bacteriol.">
        <title>Comparative genomics of 28 Salmonella enterica isolates: evidence for CRISPR-mediated adaptive sublineage evolution.</title>
        <authorList>
            <person name="Fricke W.F."/>
            <person name="Mammel M.K."/>
            <person name="McDermott P.F."/>
            <person name="Tartera C."/>
            <person name="White D.G."/>
            <person name="Leclerc J.E."/>
            <person name="Ravel J."/>
            <person name="Cebula T.A."/>
        </authorList>
    </citation>
    <scope>NUCLEOTIDE SEQUENCE [LARGE SCALE GENOMIC DNA]</scope>
    <source>
        <strain>CT_02021853</strain>
    </source>
</reference>
<gene>
    <name evidence="1" type="primary">prfC</name>
    <name type="ordered locus">SeD_A4974</name>
</gene>
<proteinExistence type="inferred from homology"/>
<feature type="chain" id="PRO_1000092494" description="Peptide chain release factor 3">
    <location>
        <begin position="1"/>
        <end position="529"/>
    </location>
</feature>
<feature type="domain" description="tr-type G">
    <location>
        <begin position="11"/>
        <end position="280"/>
    </location>
</feature>
<feature type="binding site" evidence="1">
    <location>
        <begin position="20"/>
        <end position="27"/>
    </location>
    <ligand>
        <name>GTP</name>
        <dbReference type="ChEBI" id="CHEBI:37565"/>
    </ligand>
</feature>
<feature type="binding site" evidence="1">
    <location>
        <begin position="88"/>
        <end position="92"/>
    </location>
    <ligand>
        <name>GTP</name>
        <dbReference type="ChEBI" id="CHEBI:37565"/>
    </ligand>
</feature>
<feature type="binding site" evidence="1">
    <location>
        <begin position="142"/>
        <end position="145"/>
    </location>
    <ligand>
        <name>GTP</name>
        <dbReference type="ChEBI" id="CHEBI:37565"/>
    </ligand>
</feature>
<keyword id="KW-0963">Cytoplasm</keyword>
<keyword id="KW-0342">GTP-binding</keyword>
<keyword id="KW-0547">Nucleotide-binding</keyword>
<keyword id="KW-0648">Protein biosynthesis</keyword>
<dbReference type="EMBL" id="CP001144">
    <property type="protein sequence ID" value="ACH75127.1"/>
    <property type="molecule type" value="Genomic_DNA"/>
</dbReference>
<dbReference type="RefSeq" id="WP_000175965.1">
    <property type="nucleotide sequence ID" value="NC_011205.1"/>
</dbReference>
<dbReference type="SMR" id="B5FTB7"/>
<dbReference type="KEGG" id="sed:SeD_A4974"/>
<dbReference type="HOGENOM" id="CLU_002794_2_1_6"/>
<dbReference type="Proteomes" id="UP000008322">
    <property type="component" value="Chromosome"/>
</dbReference>
<dbReference type="GO" id="GO:0005829">
    <property type="term" value="C:cytosol"/>
    <property type="evidence" value="ECO:0007669"/>
    <property type="project" value="TreeGrafter"/>
</dbReference>
<dbReference type="GO" id="GO:0005525">
    <property type="term" value="F:GTP binding"/>
    <property type="evidence" value="ECO:0007669"/>
    <property type="project" value="UniProtKB-UniRule"/>
</dbReference>
<dbReference type="GO" id="GO:0003924">
    <property type="term" value="F:GTPase activity"/>
    <property type="evidence" value="ECO:0007669"/>
    <property type="project" value="InterPro"/>
</dbReference>
<dbReference type="GO" id="GO:0097216">
    <property type="term" value="F:guanosine tetraphosphate binding"/>
    <property type="evidence" value="ECO:0007669"/>
    <property type="project" value="UniProtKB-ARBA"/>
</dbReference>
<dbReference type="GO" id="GO:0016150">
    <property type="term" value="F:translation release factor activity, codon nonspecific"/>
    <property type="evidence" value="ECO:0007669"/>
    <property type="project" value="TreeGrafter"/>
</dbReference>
<dbReference type="GO" id="GO:0016149">
    <property type="term" value="F:translation release factor activity, codon specific"/>
    <property type="evidence" value="ECO:0007669"/>
    <property type="project" value="UniProtKB-UniRule"/>
</dbReference>
<dbReference type="GO" id="GO:0006449">
    <property type="term" value="P:regulation of translational termination"/>
    <property type="evidence" value="ECO:0007669"/>
    <property type="project" value="UniProtKB-UniRule"/>
</dbReference>
<dbReference type="CDD" id="cd04169">
    <property type="entry name" value="RF3"/>
    <property type="match status" value="1"/>
</dbReference>
<dbReference type="CDD" id="cd03689">
    <property type="entry name" value="RF3_II"/>
    <property type="match status" value="1"/>
</dbReference>
<dbReference type="CDD" id="cd16259">
    <property type="entry name" value="RF3_III"/>
    <property type="match status" value="1"/>
</dbReference>
<dbReference type="FunFam" id="2.40.30.10:FF:000040">
    <property type="entry name" value="Peptide chain release factor 3"/>
    <property type="match status" value="1"/>
</dbReference>
<dbReference type="FunFam" id="3.30.70.3280:FF:000001">
    <property type="entry name" value="Peptide chain release factor 3"/>
    <property type="match status" value="1"/>
</dbReference>
<dbReference type="FunFam" id="3.40.50.300:FF:000184">
    <property type="entry name" value="Peptide chain release factor 3"/>
    <property type="match status" value="1"/>
</dbReference>
<dbReference type="FunFam" id="3.40.50.300:FF:000253">
    <property type="entry name" value="Peptide chain release factor 3"/>
    <property type="match status" value="1"/>
</dbReference>
<dbReference type="Gene3D" id="3.40.50.300">
    <property type="entry name" value="P-loop containing nucleotide triphosphate hydrolases"/>
    <property type="match status" value="3"/>
</dbReference>
<dbReference type="Gene3D" id="3.30.70.3280">
    <property type="entry name" value="Peptide chain release factor 3, domain III"/>
    <property type="match status" value="1"/>
</dbReference>
<dbReference type="HAMAP" id="MF_00072">
    <property type="entry name" value="Rel_fac_3"/>
    <property type="match status" value="1"/>
</dbReference>
<dbReference type="InterPro" id="IPR053905">
    <property type="entry name" value="EF-G-like_DII"/>
</dbReference>
<dbReference type="InterPro" id="IPR035647">
    <property type="entry name" value="EFG_III/V"/>
</dbReference>
<dbReference type="InterPro" id="IPR031157">
    <property type="entry name" value="G_TR_CS"/>
</dbReference>
<dbReference type="InterPro" id="IPR027417">
    <property type="entry name" value="P-loop_NTPase"/>
</dbReference>
<dbReference type="InterPro" id="IPR004548">
    <property type="entry name" value="PrfC"/>
</dbReference>
<dbReference type="InterPro" id="IPR032090">
    <property type="entry name" value="RF3_C"/>
</dbReference>
<dbReference type="InterPro" id="IPR038467">
    <property type="entry name" value="RF3_dom_3_sf"/>
</dbReference>
<dbReference type="InterPro" id="IPR041732">
    <property type="entry name" value="RF3_GTP-bd"/>
</dbReference>
<dbReference type="InterPro" id="IPR005225">
    <property type="entry name" value="Small_GTP-bd"/>
</dbReference>
<dbReference type="InterPro" id="IPR000795">
    <property type="entry name" value="T_Tr_GTP-bd_dom"/>
</dbReference>
<dbReference type="InterPro" id="IPR009000">
    <property type="entry name" value="Transl_B-barrel_sf"/>
</dbReference>
<dbReference type="NCBIfam" id="TIGR00503">
    <property type="entry name" value="prfC"/>
    <property type="match status" value="1"/>
</dbReference>
<dbReference type="NCBIfam" id="NF001964">
    <property type="entry name" value="PRK00741.1"/>
    <property type="match status" value="1"/>
</dbReference>
<dbReference type="NCBIfam" id="TIGR00231">
    <property type="entry name" value="small_GTP"/>
    <property type="match status" value="1"/>
</dbReference>
<dbReference type="PANTHER" id="PTHR43556">
    <property type="entry name" value="PEPTIDE CHAIN RELEASE FACTOR RF3"/>
    <property type="match status" value="1"/>
</dbReference>
<dbReference type="PANTHER" id="PTHR43556:SF2">
    <property type="entry name" value="PEPTIDE CHAIN RELEASE FACTOR RF3"/>
    <property type="match status" value="1"/>
</dbReference>
<dbReference type="Pfam" id="PF22042">
    <property type="entry name" value="EF-G_D2"/>
    <property type="match status" value="1"/>
</dbReference>
<dbReference type="Pfam" id="PF00009">
    <property type="entry name" value="GTP_EFTU"/>
    <property type="match status" value="1"/>
</dbReference>
<dbReference type="Pfam" id="PF16658">
    <property type="entry name" value="RF3_C"/>
    <property type="match status" value="1"/>
</dbReference>
<dbReference type="PRINTS" id="PR00315">
    <property type="entry name" value="ELONGATNFCT"/>
</dbReference>
<dbReference type="SUPFAM" id="SSF54980">
    <property type="entry name" value="EF-G C-terminal domain-like"/>
    <property type="match status" value="1"/>
</dbReference>
<dbReference type="SUPFAM" id="SSF52540">
    <property type="entry name" value="P-loop containing nucleoside triphosphate hydrolases"/>
    <property type="match status" value="1"/>
</dbReference>
<dbReference type="SUPFAM" id="SSF50447">
    <property type="entry name" value="Translation proteins"/>
    <property type="match status" value="1"/>
</dbReference>
<dbReference type="PROSITE" id="PS00301">
    <property type="entry name" value="G_TR_1"/>
    <property type="match status" value="1"/>
</dbReference>
<dbReference type="PROSITE" id="PS51722">
    <property type="entry name" value="G_TR_2"/>
    <property type="match status" value="1"/>
</dbReference>
<accession>B5FTB7</accession>
<name>RF3_SALDC</name>
<evidence type="ECO:0000255" key="1">
    <source>
        <dbReference type="HAMAP-Rule" id="MF_00072"/>
    </source>
</evidence>
<comment type="function">
    <text evidence="1">Increases the formation of ribosomal termination complexes and stimulates activities of RF-1 and RF-2. It binds guanine nucleotides and has strong preference for UGA stop codons. It may interact directly with the ribosome. The stimulation of RF-1 and RF-2 is significantly reduced by GTP and GDP, but not by GMP.</text>
</comment>
<comment type="subcellular location">
    <subcellularLocation>
        <location evidence="1">Cytoplasm</location>
    </subcellularLocation>
</comment>
<comment type="similarity">
    <text evidence="1">Belongs to the TRAFAC class translation factor GTPase superfamily. Classic translation factor GTPase family. PrfC subfamily.</text>
</comment>
<protein>
    <recommendedName>
        <fullName evidence="1">Peptide chain release factor 3</fullName>
        <shortName evidence="1">RF-3</shortName>
    </recommendedName>
</protein>